<evidence type="ECO:0000255" key="1">
    <source>
        <dbReference type="HAMAP-Rule" id="MF_01903"/>
    </source>
</evidence>
<protein>
    <recommendedName>
        <fullName evidence="1">Xanthine-guanine phosphoribosyltransferase</fullName>
        <shortName evidence="1">XGPRT</shortName>
        <ecNumber evidence="1">2.4.2.-</ecNumber>
        <ecNumber evidence="1">2.4.2.22</ecNumber>
    </recommendedName>
    <alternativeName>
        <fullName evidence="1">Xanthine phosphoribosyltransferase</fullName>
    </alternativeName>
</protein>
<keyword id="KW-0997">Cell inner membrane</keyword>
<keyword id="KW-1003">Cell membrane</keyword>
<keyword id="KW-0328">Glycosyltransferase</keyword>
<keyword id="KW-0460">Magnesium</keyword>
<keyword id="KW-0472">Membrane</keyword>
<keyword id="KW-0479">Metal-binding</keyword>
<keyword id="KW-0660">Purine salvage</keyword>
<keyword id="KW-0808">Transferase</keyword>
<reference key="1">
    <citation type="journal article" date="2003" name="Genome Res.">
        <title>Comparative genome analysis of Vibrio vulnificus, a marine pathogen.</title>
        <authorList>
            <person name="Chen C.-Y."/>
            <person name="Wu K.-M."/>
            <person name="Chang Y.-C."/>
            <person name="Chang C.-H."/>
            <person name="Tsai H.-C."/>
            <person name="Liao T.-L."/>
            <person name="Liu Y.-M."/>
            <person name="Chen H.-J."/>
            <person name="Shen A.B.-T."/>
            <person name="Li J.-C."/>
            <person name="Su T.-L."/>
            <person name="Shao C.-P."/>
            <person name="Lee C.-T."/>
            <person name="Hor L.-I."/>
            <person name="Tsai S.-F."/>
        </authorList>
    </citation>
    <scope>NUCLEOTIDE SEQUENCE [LARGE SCALE GENOMIC DNA]</scope>
    <source>
        <strain>YJ016</strain>
    </source>
</reference>
<name>XGPT_VIBVY</name>
<gene>
    <name evidence="1" type="primary">gpt</name>
    <name type="ordered locus">VV0855</name>
</gene>
<comment type="function">
    <text evidence="1">Purine salvage pathway enzyme that catalyzes the transfer of the ribosyl-5-phosphate group from 5-phospho-alpha-D-ribose 1-diphosphate (PRPP) to the N9 position of the 6-oxopurines guanine and xanthine to form the corresponding ribonucleotides GMP (guanosine 5'-monophosphate) and XMP (xanthosine 5'-monophosphate), with the release of PPi. To a lesser extent, also acts on hypoxanthine.</text>
</comment>
<comment type="catalytic activity">
    <reaction evidence="1">
        <text>GMP + diphosphate = guanine + 5-phospho-alpha-D-ribose 1-diphosphate</text>
        <dbReference type="Rhea" id="RHEA:25424"/>
        <dbReference type="ChEBI" id="CHEBI:16235"/>
        <dbReference type="ChEBI" id="CHEBI:33019"/>
        <dbReference type="ChEBI" id="CHEBI:58017"/>
        <dbReference type="ChEBI" id="CHEBI:58115"/>
    </reaction>
    <physiologicalReaction direction="right-to-left" evidence="1">
        <dbReference type="Rhea" id="RHEA:25426"/>
    </physiologicalReaction>
</comment>
<comment type="catalytic activity">
    <reaction evidence="1">
        <text>XMP + diphosphate = xanthine + 5-phospho-alpha-D-ribose 1-diphosphate</text>
        <dbReference type="Rhea" id="RHEA:10800"/>
        <dbReference type="ChEBI" id="CHEBI:17712"/>
        <dbReference type="ChEBI" id="CHEBI:33019"/>
        <dbReference type="ChEBI" id="CHEBI:57464"/>
        <dbReference type="ChEBI" id="CHEBI:58017"/>
        <dbReference type="EC" id="2.4.2.22"/>
    </reaction>
    <physiologicalReaction direction="right-to-left" evidence="1">
        <dbReference type="Rhea" id="RHEA:10802"/>
    </physiologicalReaction>
</comment>
<comment type="catalytic activity">
    <reaction evidence="1">
        <text>IMP + diphosphate = hypoxanthine + 5-phospho-alpha-D-ribose 1-diphosphate</text>
        <dbReference type="Rhea" id="RHEA:17973"/>
        <dbReference type="ChEBI" id="CHEBI:17368"/>
        <dbReference type="ChEBI" id="CHEBI:33019"/>
        <dbReference type="ChEBI" id="CHEBI:58017"/>
        <dbReference type="ChEBI" id="CHEBI:58053"/>
    </reaction>
    <physiologicalReaction direction="right-to-left" evidence="1">
        <dbReference type="Rhea" id="RHEA:17975"/>
    </physiologicalReaction>
</comment>
<comment type="cofactor">
    <cofactor evidence="1">
        <name>Mg(2+)</name>
        <dbReference type="ChEBI" id="CHEBI:18420"/>
    </cofactor>
</comment>
<comment type="pathway">
    <text evidence="1">Purine metabolism; GMP biosynthesis via salvage pathway; GMP from guanine: step 1/1.</text>
</comment>
<comment type="pathway">
    <text evidence="1">Purine metabolism; XMP biosynthesis via salvage pathway; XMP from xanthine: step 1/1.</text>
</comment>
<comment type="subunit">
    <text evidence="1">Homotetramer.</text>
</comment>
<comment type="subcellular location">
    <subcellularLocation>
        <location evidence="1">Cell inner membrane</location>
        <topology evidence="1">Peripheral membrane protein</topology>
    </subcellularLocation>
</comment>
<comment type="similarity">
    <text evidence="1">Belongs to the purine/pyrimidine phosphoribosyltransferase family. XGPT subfamily.</text>
</comment>
<dbReference type="EC" id="2.4.2.-" evidence="1"/>
<dbReference type="EC" id="2.4.2.22" evidence="1"/>
<dbReference type="EMBL" id="BA000037">
    <property type="protein sequence ID" value="BAC93619.1"/>
    <property type="molecule type" value="Genomic_DNA"/>
</dbReference>
<dbReference type="SMR" id="Q7MN62"/>
<dbReference type="STRING" id="672.VV93_v1c07940"/>
<dbReference type="KEGG" id="vvy:VV0855"/>
<dbReference type="eggNOG" id="COG2236">
    <property type="taxonomic scope" value="Bacteria"/>
</dbReference>
<dbReference type="HOGENOM" id="CLU_080904_3_0_6"/>
<dbReference type="UniPathway" id="UPA00602">
    <property type="reaction ID" value="UER00658"/>
</dbReference>
<dbReference type="UniPathway" id="UPA00909">
    <property type="reaction ID" value="UER00887"/>
</dbReference>
<dbReference type="Proteomes" id="UP000002675">
    <property type="component" value="Chromosome I"/>
</dbReference>
<dbReference type="GO" id="GO:0005829">
    <property type="term" value="C:cytosol"/>
    <property type="evidence" value="ECO:0007669"/>
    <property type="project" value="TreeGrafter"/>
</dbReference>
<dbReference type="GO" id="GO:0005886">
    <property type="term" value="C:plasma membrane"/>
    <property type="evidence" value="ECO:0007669"/>
    <property type="project" value="UniProtKB-SubCell"/>
</dbReference>
<dbReference type="GO" id="GO:0052657">
    <property type="term" value="F:guanine phosphoribosyltransferase activity"/>
    <property type="evidence" value="ECO:0007669"/>
    <property type="project" value="RHEA"/>
</dbReference>
<dbReference type="GO" id="GO:0004422">
    <property type="term" value="F:hypoxanthine phosphoribosyltransferase activity"/>
    <property type="evidence" value="ECO:0007669"/>
    <property type="project" value="TreeGrafter"/>
</dbReference>
<dbReference type="GO" id="GO:0000287">
    <property type="term" value="F:magnesium ion binding"/>
    <property type="evidence" value="ECO:0007669"/>
    <property type="project" value="UniProtKB-UniRule"/>
</dbReference>
<dbReference type="GO" id="GO:0000310">
    <property type="term" value="F:xanthine phosphoribosyltransferase activity"/>
    <property type="evidence" value="ECO:0007669"/>
    <property type="project" value="UniProtKB-UniRule"/>
</dbReference>
<dbReference type="GO" id="GO:0032263">
    <property type="term" value="P:GMP salvage"/>
    <property type="evidence" value="ECO:0007669"/>
    <property type="project" value="UniProtKB-UniRule"/>
</dbReference>
<dbReference type="GO" id="GO:0032264">
    <property type="term" value="P:IMP salvage"/>
    <property type="evidence" value="ECO:0007669"/>
    <property type="project" value="TreeGrafter"/>
</dbReference>
<dbReference type="GO" id="GO:0006166">
    <property type="term" value="P:purine ribonucleoside salvage"/>
    <property type="evidence" value="ECO:0007669"/>
    <property type="project" value="UniProtKB-KW"/>
</dbReference>
<dbReference type="GO" id="GO:0032265">
    <property type="term" value="P:XMP salvage"/>
    <property type="evidence" value="ECO:0007669"/>
    <property type="project" value="UniProtKB-UniRule"/>
</dbReference>
<dbReference type="CDD" id="cd06223">
    <property type="entry name" value="PRTases_typeI"/>
    <property type="match status" value="1"/>
</dbReference>
<dbReference type="Gene3D" id="3.40.50.2020">
    <property type="match status" value="1"/>
</dbReference>
<dbReference type="HAMAP" id="MF_01903">
    <property type="entry name" value="XGPRT"/>
    <property type="match status" value="1"/>
</dbReference>
<dbReference type="InterPro" id="IPR000836">
    <property type="entry name" value="PRibTrfase_dom"/>
</dbReference>
<dbReference type="InterPro" id="IPR029057">
    <property type="entry name" value="PRTase-like"/>
</dbReference>
<dbReference type="InterPro" id="IPR023747">
    <property type="entry name" value="Xanthine_Guanine_PRibTrfase"/>
</dbReference>
<dbReference type="NCBIfam" id="NF006613">
    <property type="entry name" value="PRK09177.1"/>
    <property type="match status" value="1"/>
</dbReference>
<dbReference type="NCBIfam" id="NF000014">
    <property type="entry name" value="tet_prtrans_34"/>
    <property type="match status" value="1"/>
</dbReference>
<dbReference type="PANTHER" id="PTHR39563">
    <property type="entry name" value="XANTHINE PHOSPHORIBOSYLTRANSFERASE"/>
    <property type="match status" value="1"/>
</dbReference>
<dbReference type="PANTHER" id="PTHR39563:SF1">
    <property type="entry name" value="XANTHINE-GUANINE PHOSPHORIBOSYLTRANSFERASE"/>
    <property type="match status" value="1"/>
</dbReference>
<dbReference type="Pfam" id="PF00156">
    <property type="entry name" value="Pribosyltran"/>
    <property type="match status" value="1"/>
</dbReference>
<dbReference type="SUPFAM" id="SSF53271">
    <property type="entry name" value="PRTase-like"/>
    <property type="match status" value="1"/>
</dbReference>
<dbReference type="PROSITE" id="PS00103">
    <property type="entry name" value="PUR_PYR_PR_TRANSFER"/>
    <property type="match status" value="1"/>
</dbReference>
<accession>Q7MN62</accession>
<organism>
    <name type="scientific">Vibrio vulnificus (strain YJ016)</name>
    <dbReference type="NCBI Taxonomy" id="196600"/>
    <lineage>
        <taxon>Bacteria</taxon>
        <taxon>Pseudomonadati</taxon>
        <taxon>Pseudomonadota</taxon>
        <taxon>Gammaproteobacteria</taxon>
        <taxon>Vibrionales</taxon>
        <taxon>Vibrionaceae</taxon>
        <taxon>Vibrio</taxon>
    </lineage>
</organism>
<sequence>MSNKFVITWDAMQTYCRQLAEKQMPADQWKGIWAVSRGGLVPGAILARELGIRYVDTICISSYDHDHQRDMTVLKAPEGDGEGYLIVEDLVDSGDTARKLREMYPKAKLIAVCAKPSGKELLDDYVVDIAQDTWIEQPWDMALAYAEPVNRKQK</sequence>
<proteinExistence type="inferred from homology"/>
<feature type="chain" id="PRO_0000139694" description="Xanthine-guanine phosphoribosyltransferase">
    <location>
        <begin position="1"/>
        <end position="154"/>
    </location>
</feature>
<feature type="binding site" evidence="1">
    <location>
        <begin position="37"/>
        <end position="38"/>
    </location>
    <ligand>
        <name>5-phospho-alpha-D-ribose 1-diphosphate</name>
        <dbReference type="ChEBI" id="CHEBI:58017"/>
    </ligand>
</feature>
<feature type="binding site" evidence="1">
    <location>
        <position position="69"/>
    </location>
    <ligand>
        <name>5-phospho-alpha-D-ribose 1-diphosphate</name>
        <dbReference type="ChEBI" id="CHEBI:58017"/>
    </ligand>
</feature>
<feature type="binding site" evidence="1">
    <location>
        <position position="69"/>
    </location>
    <ligand>
        <name>GMP</name>
        <dbReference type="ChEBI" id="CHEBI:58115"/>
    </ligand>
</feature>
<feature type="binding site" evidence="1">
    <location>
        <begin position="88"/>
        <end position="96"/>
    </location>
    <ligand>
        <name>5-phospho-alpha-D-ribose 1-diphosphate</name>
        <dbReference type="ChEBI" id="CHEBI:58017"/>
    </ligand>
</feature>
<feature type="binding site" evidence="1">
    <location>
        <position position="89"/>
    </location>
    <ligand>
        <name>Mg(2+)</name>
        <dbReference type="ChEBI" id="CHEBI:18420"/>
    </ligand>
</feature>
<feature type="binding site" evidence="1">
    <location>
        <begin position="92"/>
        <end position="96"/>
    </location>
    <ligand>
        <name>GMP</name>
        <dbReference type="ChEBI" id="CHEBI:58115"/>
    </ligand>
</feature>
<feature type="binding site" evidence="1">
    <location>
        <position position="92"/>
    </location>
    <ligand>
        <name>guanine</name>
        <dbReference type="ChEBI" id="CHEBI:16235"/>
    </ligand>
</feature>
<feature type="binding site" evidence="1">
    <location>
        <position position="92"/>
    </location>
    <ligand>
        <name>xanthine</name>
        <dbReference type="ChEBI" id="CHEBI:17712"/>
    </ligand>
</feature>
<feature type="binding site" evidence="1">
    <location>
        <begin position="134"/>
        <end position="135"/>
    </location>
    <ligand>
        <name>GMP</name>
        <dbReference type="ChEBI" id="CHEBI:58115"/>
    </ligand>
</feature>
<feature type="binding site" evidence="1">
    <location>
        <position position="135"/>
    </location>
    <ligand>
        <name>guanine</name>
        <dbReference type="ChEBI" id="CHEBI:16235"/>
    </ligand>
</feature>
<feature type="binding site" evidence="1">
    <location>
        <position position="135"/>
    </location>
    <ligand>
        <name>xanthine</name>
        <dbReference type="ChEBI" id="CHEBI:17712"/>
    </ligand>
</feature>